<organism>
    <name type="scientific">Escherichia coli O157:H7</name>
    <dbReference type="NCBI Taxonomy" id="83334"/>
    <lineage>
        <taxon>Bacteria</taxon>
        <taxon>Pseudomonadati</taxon>
        <taxon>Pseudomonadota</taxon>
        <taxon>Gammaproteobacteria</taxon>
        <taxon>Enterobacterales</taxon>
        <taxon>Enterobacteriaceae</taxon>
        <taxon>Escherichia</taxon>
    </lineage>
</organism>
<keyword id="KW-0997">Cell inner membrane</keyword>
<keyword id="KW-1003">Cell membrane</keyword>
<keyword id="KW-0311">Gluconate utilization</keyword>
<keyword id="KW-0472">Membrane</keyword>
<keyword id="KW-1185">Reference proteome</keyword>
<keyword id="KW-0762">Sugar transport</keyword>
<keyword id="KW-0812">Transmembrane</keyword>
<keyword id="KW-1133">Transmembrane helix</keyword>
<keyword id="KW-0813">Transport</keyword>
<protein>
    <recommendedName>
        <fullName>Low-affinity gluconate transporter</fullName>
    </recommendedName>
    <alternativeName>
        <fullName>Gluconate permease</fullName>
    </alternativeName>
    <alternativeName>
        <fullName>Gnt-I system</fullName>
    </alternativeName>
</protein>
<proteinExistence type="inferred from homology"/>
<name>GNTU_ECO57</name>
<comment type="function">
    <text evidence="1">Part of the gluconate utilization system Gnt-I; low-affinity intake of gluconate.</text>
</comment>
<comment type="subcellular location">
    <subcellularLocation>
        <location evidence="1">Cell inner membrane</location>
        <topology evidence="1">Multi-pass membrane protein</topology>
    </subcellularLocation>
</comment>
<comment type="similarity">
    <text evidence="3">Belongs to the GntP permease family.</text>
</comment>
<reference key="1">
    <citation type="journal article" date="2001" name="Nature">
        <title>Genome sequence of enterohaemorrhagic Escherichia coli O157:H7.</title>
        <authorList>
            <person name="Perna N.T."/>
            <person name="Plunkett G. III"/>
            <person name="Burland V."/>
            <person name="Mau B."/>
            <person name="Glasner J.D."/>
            <person name="Rose D.J."/>
            <person name="Mayhew G.F."/>
            <person name="Evans P.S."/>
            <person name="Gregor J."/>
            <person name="Kirkpatrick H.A."/>
            <person name="Posfai G."/>
            <person name="Hackett J."/>
            <person name="Klink S."/>
            <person name="Boutin A."/>
            <person name="Shao Y."/>
            <person name="Miller L."/>
            <person name="Grotbeck E.J."/>
            <person name="Davis N.W."/>
            <person name="Lim A."/>
            <person name="Dimalanta E.T."/>
            <person name="Potamousis K."/>
            <person name="Apodaca J."/>
            <person name="Anantharaman T.S."/>
            <person name="Lin J."/>
            <person name="Yen G."/>
            <person name="Schwartz D.C."/>
            <person name="Welch R.A."/>
            <person name="Blattner F.R."/>
        </authorList>
    </citation>
    <scope>NUCLEOTIDE SEQUENCE [LARGE SCALE GENOMIC DNA]</scope>
    <source>
        <strain>O157:H7 / EDL933 / ATCC 700927 / EHEC</strain>
    </source>
</reference>
<reference key="2">
    <citation type="journal article" date="2001" name="DNA Res.">
        <title>Complete genome sequence of enterohemorrhagic Escherichia coli O157:H7 and genomic comparison with a laboratory strain K-12.</title>
        <authorList>
            <person name="Hayashi T."/>
            <person name="Makino K."/>
            <person name="Ohnishi M."/>
            <person name="Kurokawa K."/>
            <person name="Ishii K."/>
            <person name="Yokoyama K."/>
            <person name="Han C.-G."/>
            <person name="Ohtsubo E."/>
            <person name="Nakayama K."/>
            <person name="Murata T."/>
            <person name="Tanaka M."/>
            <person name="Tobe T."/>
            <person name="Iida T."/>
            <person name="Takami H."/>
            <person name="Honda T."/>
            <person name="Sasakawa C."/>
            <person name="Ogasawara N."/>
            <person name="Yasunaga T."/>
            <person name="Kuhara S."/>
            <person name="Shiba T."/>
            <person name="Hattori M."/>
            <person name="Shinagawa H."/>
        </authorList>
    </citation>
    <scope>NUCLEOTIDE SEQUENCE [LARGE SCALE GENOMIC DNA]</scope>
    <source>
        <strain>O157:H7 / Sakai / RIMD 0509952 / EHEC</strain>
    </source>
</reference>
<gene>
    <name type="primary">gntU</name>
    <name type="ordered locus">Z4804</name>
    <name type="ordered locus">ECs4285</name>
</gene>
<sequence>MTTLTLVLTAVGSVLLLLFLVMKARMHAFLALMVVSMGAGLFSGMPLDKIAATMEKGMGGTLGFLAVVVALGAMFGKILHETGAVDQIAVKMLKSFGHSRAHYAIGLAGLVCALPLFFEVAIVLLISVAFSMARHTGTNLVKLVIPLFAGVAAAAAFLVPGPAPMLLASQMNADFGWMILIGLCAAIPGMIIAGPLWGNFISRYVELHIPDDISEPHLGEGKMPSFGFSLSLILLPLVLVGLKTIAARFVPEGSTAYEWFEFIGHPFTAILVACLVAIYGLAMRQGMPKDKVMEICGHALQPAGIILLVIGAGGVFKQVLVDSGVGPALGEALTGMGLPIAITCFVLAAAVRIIQGSATVACLTAVGLVMPVIEQLNYSGAQMAALSICIAGGSIVVSHVNDAGFWLFGKFTGATEAETLKTWTMMETILGTVGAIVGMIAFQLLS</sequence>
<feature type="chain" id="PRO_0000061936" description="Low-affinity gluconate transporter">
    <location>
        <begin position="1"/>
        <end position="446"/>
    </location>
</feature>
<feature type="topological domain" description="Cytoplasmic" evidence="2">
    <location>
        <position position="1"/>
    </location>
</feature>
<feature type="transmembrane region" description="Helical" evidence="2">
    <location>
        <begin position="2"/>
        <end position="22"/>
    </location>
</feature>
<feature type="topological domain" description="Periplasmic" evidence="2">
    <location>
        <begin position="23"/>
        <end position="26"/>
    </location>
</feature>
<feature type="transmembrane region" description="Helical" evidence="2">
    <location>
        <begin position="27"/>
        <end position="47"/>
    </location>
</feature>
<feature type="topological domain" description="Cytoplasmic" evidence="2">
    <location>
        <begin position="48"/>
        <end position="58"/>
    </location>
</feature>
<feature type="transmembrane region" description="Helical" evidence="2">
    <location>
        <begin position="59"/>
        <end position="79"/>
    </location>
</feature>
<feature type="topological domain" description="Periplasmic" evidence="2">
    <location>
        <begin position="80"/>
        <end position="109"/>
    </location>
</feature>
<feature type="transmembrane region" description="Helical" evidence="2">
    <location>
        <begin position="110"/>
        <end position="130"/>
    </location>
</feature>
<feature type="topological domain" description="Cytoplasmic" evidence="2">
    <location>
        <begin position="131"/>
        <end position="142"/>
    </location>
</feature>
<feature type="transmembrane region" description="Helical" evidence="2">
    <location>
        <begin position="143"/>
        <end position="163"/>
    </location>
</feature>
<feature type="topological domain" description="Periplasmic" evidence="2">
    <location>
        <begin position="164"/>
        <end position="176"/>
    </location>
</feature>
<feature type="transmembrane region" description="Helical" evidence="2">
    <location>
        <begin position="177"/>
        <end position="197"/>
    </location>
</feature>
<feature type="topological domain" description="Cytoplasmic" evidence="2">
    <location>
        <begin position="198"/>
        <end position="225"/>
    </location>
</feature>
<feature type="transmembrane region" description="Helical" evidence="2">
    <location>
        <begin position="226"/>
        <end position="246"/>
    </location>
</feature>
<feature type="topological domain" description="Periplasmic" evidence="2">
    <location>
        <begin position="247"/>
        <end position="261"/>
    </location>
</feature>
<feature type="transmembrane region" description="Helical" evidence="2">
    <location>
        <begin position="262"/>
        <end position="282"/>
    </location>
</feature>
<feature type="topological domain" description="Cytoplasmic" evidence="2">
    <location>
        <begin position="283"/>
        <end position="294"/>
    </location>
</feature>
<feature type="transmembrane region" description="Helical" evidence="2">
    <location>
        <begin position="295"/>
        <end position="315"/>
    </location>
</feature>
<feature type="topological domain" description="Periplasmic" evidence="2">
    <location>
        <begin position="316"/>
        <end position="330"/>
    </location>
</feature>
<feature type="transmembrane region" description="Helical" evidence="2">
    <location>
        <begin position="331"/>
        <end position="351"/>
    </location>
</feature>
<feature type="topological domain" description="Cytoplasmic" evidence="2">
    <location>
        <position position="352"/>
    </location>
</feature>
<feature type="transmembrane region" description="Helical" evidence="2">
    <location>
        <begin position="353"/>
        <end position="373"/>
    </location>
</feature>
<feature type="topological domain" description="Periplasmic" evidence="2">
    <location>
        <begin position="374"/>
        <end position="387"/>
    </location>
</feature>
<feature type="transmembrane region" description="Helical" evidence="2">
    <location>
        <begin position="388"/>
        <end position="408"/>
    </location>
</feature>
<feature type="topological domain" description="Cytoplasmic" evidence="2">
    <location>
        <begin position="409"/>
        <end position="424"/>
    </location>
</feature>
<feature type="transmembrane region" description="Helical" evidence="2">
    <location>
        <begin position="425"/>
        <end position="445"/>
    </location>
</feature>
<feature type="topological domain" description="Periplasmic" evidence="2">
    <location>
        <position position="446"/>
    </location>
</feature>
<evidence type="ECO:0000250" key="1"/>
<evidence type="ECO:0000255" key="2"/>
<evidence type="ECO:0000305" key="3"/>
<dbReference type="EMBL" id="AE005174">
    <property type="protein sequence ID" value="AAG58545.1"/>
    <property type="molecule type" value="Genomic_DNA"/>
</dbReference>
<dbReference type="EMBL" id="BA000007">
    <property type="protein sequence ID" value="BAB37708.1"/>
    <property type="molecule type" value="Genomic_DNA"/>
</dbReference>
<dbReference type="PIR" id="E86010">
    <property type="entry name" value="E86010"/>
</dbReference>
<dbReference type="PIR" id="E91164">
    <property type="entry name" value="E91164"/>
</dbReference>
<dbReference type="RefSeq" id="NP_312312.1">
    <property type="nucleotide sequence ID" value="NC_002695.1"/>
</dbReference>
<dbReference type="RefSeq" id="WP_000210111.1">
    <property type="nucleotide sequence ID" value="NZ_VOAI01000004.1"/>
</dbReference>
<dbReference type="SMR" id="P0AC97"/>
<dbReference type="STRING" id="155864.Z4804"/>
<dbReference type="GeneID" id="75202280"/>
<dbReference type="GeneID" id="915858"/>
<dbReference type="KEGG" id="ece:Z4804"/>
<dbReference type="KEGG" id="ecs:ECs_4285"/>
<dbReference type="PATRIC" id="fig|386585.9.peg.4476"/>
<dbReference type="eggNOG" id="COG2610">
    <property type="taxonomic scope" value="Bacteria"/>
</dbReference>
<dbReference type="HOGENOM" id="CLU_027949_0_2_6"/>
<dbReference type="OMA" id="KVMDICS"/>
<dbReference type="Proteomes" id="UP000000558">
    <property type="component" value="Chromosome"/>
</dbReference>
<dbReference type="Proteomes" id="UP000002519">
    <property type="component" value="Chromosome"/>
</dbReference>
<dbReference type="GO" id="GO:0005886">
    <property type="term" value="C:plasma membrane"/>
    <property type="evidence" value="ECO:0007669"/>
    <property type="project" value="UniProtKB-SubCell"/>
</dbReference>
<dbReference type="GO" id="GO:0015128">
    <property type="term" value="F:gluconate transmembrane transporter activity"/>
    <property type="evidence" value="ECO:0007669"/>
    <property type="project" value="InterPro"/>
</dbReference>
<dbReference type="GO" id="GO:0019521">
    <property type="term" value="P:D-gluconate metabolic process"/>
    <property type="evidence" value="ECO:0007669"/>
    <property type="project" value="UniProtKB-KW"/>
</dbReference>
<dbReference type="InterPro" id="IPR003474">
    <property type="entry name" value="Glcn_transporter"/>
</dbReference>
<dbReference type="NCBIfam" id="TIGR00791">
    <property type="entry name" value="gntP"/>
    <property type="match status" value="1"/>
</dbReference>
<dbReference type="NCBIfam" id="NF007781">
    <property type="entry name" value="PRK10472.1"/>
    <property type="match status" value="1"/>
</dbReference>
<dbReference type="PANTHER" id="PTHR30354">
    <property type="entry name" value="GNT FAMILY GLUCONATE TRANSPORTER"/>
    <property type="match status" value="1"/>
</dbReference>
<dbReference type="PANTHER" id="PTHR30354:SF8">
    <property type="entry name" value="LOW-AFFINITY GLUCONATE TRANSPORTER"/>
    <property type="match status" value="1"/>
</dbReference>
<dbReference type="Pfam" id="PF02447">
    <property type="entry name" value="GntP_permease"/>
    <property type="match status" value="1"/>
</dbReference>
<dbReference type="PIRSF" id="PIRSF002746">
    <property type="entry name" value="Gluconate_transporter"/>
    <property type="match status" value="1"/>
</dbReference>
<accession>P0AC97</accession>
<accession>P46858</accession>
<accession>P76694</accession>
<accession>P76695</accession>